<keyword id="KW-0028">Amino-acid biosynthesis</keyword>
<keyword id="KW-0057">Aromatic amino acid biosynthesis</keyword>
<keyword id="KW-0413">Isomerase</keyword>
<keyword id="KW-0822">Tryptophan biosynthesis</keyword>
<name>TRPF_AZOVD</name>
<dbReference type="EC" id="5.3.1.24" evidence="1"/>
<dbReference type="EMBL" id="CP001157">
    <property type="protein sequence ID" value="ACO79570.1"/>
    <property type="molecule type" value="Genomic_DNA"/>
</dbReference>
<dbReference type="RefSeq" id="WP_012701950.1">
    <property type="nucleotide sequence ID" value="NC_012560.1"/>
</dbReference>
<dbReference type="SMR" id="C1DQD4"/>
<dbReference type="STRING" id="322710.Avin_34210"/>
<dbReference type="EnsemblBacteria" id="ACO79570">
    <property type="protein sequence ID" value="ACO79570"/>
    <property type="gene ID" value="Avin_34210"/>
</dbReference>
<dbReference type="GeneID" id="88186431"/>
<dbReference type="KEGG" id="avn:Avin_34210"/>
<dbReference type="eggNOG" id="COG0135">
    <property type="taxonomic scope" value="Bacteria"/>
</dbReference>
<dbReference type="HOGENOM" id="CLU_076364_2_0_6"/>
<dbReference type="OrthoDB" id="9796196at2"/>
<dbReference type="UniPathway" id="UPA00035">
    <property type="reaction ID" value="UER00042"/>
</dbReference>
<dbReference type="Proteomes" id="UP000002424">
    <property type="component" value="Chromosome"/>
</dbReference>
<dbReference type="GO" id="GO:0004640">
    <property type="term" value="F:phosphoribosylanthranilate isomerase activity"/>
    <property type="evidence" value="ECO:0007669"/>
    <property type="project" value="UniProtKB-UniRule"/>
</dbReference>
<dbReference type="GO" id="GO:0000162">
    <property type="term" value="P:L-tryptophan biosynthetic process"/>
    <property type="evidence" value="ECO:0007669"/>
    <property type="project" value="UniProtKB-UniRule"/>
</dbReference>
<dbReference type="CDD" id="cd00405">
    <property type="entry name" value="PRAI"/>
    <property type="match status" value="1"/>
</dbReference>
<dbReference type="FunFam" id="3.20.20.70:FF:000075">
    <property type="entry name" value="Tryptophan biosynthesis protein TRP1"/>
    <property type="match status" value="1"/>
</dbReference>
<dbReference type="Gene3D" id="3.20.20.70">
    <property type="entry name" value="Aldolase class I"/>
    <property type="match status" value="1"/>
</dbReference>
<dbReference type="HAMAP" id="MF_00135">
    <property type="entry name" value="PRAI"/>
    <property type="match status" value="1"/>
</dbReference>
<dbReference type="InterPro" id="IPR013785">
    <property type="entry name" value="Aldolase_TIM"/>
</dbReference>
<dbReference type="InterPro" id="IPR001240">
    <property type="entry name" value="PRAI_dom"/>
</dbReference>
<dbReference type="InterPro" id="IPR011060">
    <property type="entry name" value="RibuloseP-bd_barrel"/>
</dbReference>
<dbReference type="InterPro" id="IPR044643">
    <property type="entry name" value="TrpF_fam"/>
</dbReference>
<dbReference type="NCBIfam" id="NF002298">
    <property type="entry name" value="PRK01222.1-4"/>
    <property type="match status" value="1"/>
</dbReference>
<dbReference type="NCBIfam" id="NF002299">
    <property type="entry name" value="PRK01222.1-6"/>
    <property type="match status" value="1"/>
</dbReference>
<dbReference type="PANTHER" id="PTHR42894">
    <property type="entry name" value="N-(5'-PHOSPHORIBOSYL)ANTHRANILATE ISOMERASE"/>
    <property type="match status" value="1"/>
</dbReference>
<dbReference type="PANTHER" id="PTHR42894:SF1">
    <property type="entry name" value="N-(5'-PHOSPHORIBOSYL)ANTHRANILATE ISOMERASE"/>
    <property type="match status" value="1"/>
</dbReference>
<dbReference type="Pfam" id="PF00697">
    <property type="entry name" value="PRAI"/>
    <property type="match status" value="1"/>
</dbReference>
<dbReference type="SUPFAM" id="SSF51366">
    <property type="entry name" value="Ribulose-phoshate binding barrel"/>
    <property type="match status" value="1"/>
</dbReference>
<proteinExistence type="inferred from homology"/>
<sequence>MAAVRSKICGITRVEDALVAAEAGVDAIGLVFYPKSPRAVTLRQAKAIVAALPPFVTAVGLFVNATRGEVGGILDELPLDLLQFHGDETPADCEGHGRPYIKALRVRPGEDIAARCLEYCNASGILLDAYVPGVPGGTGESFDWSLVPRGLPKPVILAGGLSVRNVRVAIARVSPYAVDVSGGVEAEKGVKDAEKVRAFIREVRNA</sequence>
<protein>
    <recommendedName>
        <fullName evidence="1">N-(5'-phosphoribosyl)anthranilate isomerase</fullName>
        <shortName evidence="1">PRAI</shortName>
        <ecNumber evidence="1">5.3.1.24</ecNumber>
    </recommendedName>
</protein>
<reference key="1">
    <citation type="journal article" date="2009" name="J. Bacteriol.">
        <title>Genome sequence of Azotobacter vinelandii, an obligate aerobe specialized to support diverse anaerobic metabolic processes.</title>
        <authorList>
            <person name="Setubal J.C."/>
            <person name="Dos Santos P."/>
            <person name="Goldman B.S."/>
            <person name="Ertesvaag H."/>
            <person name="Espin G."/>
            <person name="Rubio L.M."/>
            <person name="Valla S."/>
            <person name="Almeida N.F."/>
            <person name="Balasubramanian D."/>
            <person name="Cromes L."/>
            <person name="Curatti L."/>
            <person name="Du Z."/>
            <person name="Godsy E."/>
            <person name="Goodner B."/>
            <person name="Hellner-Burris K."/>
            <person name="Hernandez J.A."/>
            <person name="Houmiel K."/>
            <person name="Imperial J."/>
            <person name="Kennedy C."/>
            <person name="Larson T.J."/>
            <person name="Latreille P."/>
            <person name="Ligon L.S."/>
            <person name="Lu J."/>
            <person name="Maerk M."/>
            <person name="Miller N.M."/>
            <person name="Norton S."/>
            <person name="O'Carroll I.P."/>
            <person name="Paulsen I."/>
            <person name="Raulfs E.C."/>
            <person name="Roemer R."/>
            <person name="Rosser J."/>
            <person name="Segura D."/>
            <person name="Slater S."/>
            <person name="Stricklin S.L."/>
            <person name="Studholme D.J."/>
            <person name="Sun J."/>
            <person name="Viana C.J."/>
            <person name="Wallin E."/>
            <person name="Wang B."/>
            <person name="Wheeler C."/>
            <person name="Zhu H."/>
            <person name="Dean D.R."/>
            <person name="Dixon R."/>
            <person name="Wood D."/>
        </authorList>
    </citation>
    <scope>NUCLEOTIDE SEQUENCE [LARGE SCALE GENOMIC DNA]</scope>
    <source>
        <strain>DJ / ATCC BAA-1303</strain>
    </source>
</reference>
<accession>C1DQD4</accession>
<organism>
    <name type="scientific">Azotobacter vinelandii (strain DJ / ATCC BAA-1303)</name>
    <dbReference type="NCBI Taxonomy" id="322710"/>
    <lineage>
        <taxon>Bacteria</taxon>
        <taxon>Pseudomonadati</taxon>
        <taxon>Pseudomonadota</taxon>
        <taxon>Gammaproteobacteria</taxon>
        <taxon>Pseudomonadales</taxon>
        <taxon>Pseudomonadaceae</taxon>
        <taxon>Azotobacter</taxon>
    </lineage>
</organism>
<evidence type="ECO:0000255" key="1">
    <source>
        <dbReference type="HAMAP-Rule" id="MF_00135"/>
    </source>
</evidence>
<comment type="catalytic activity">
    <reaction evidence="1">
        <text>N-(5-phospho-beta-D-ribosyl)anthranilate = 1-(2-carboxyphenylamino)-1-deoxy-D-ribulose 5-phosphate</text>
        <dbReference type="Rhea" id="RHEA:21540"/>
        <dbReference type="ChEBI" id="CHEBI:18277"/>
        <dbReference type="ChEBI" id="CHEBI:58613"/>
        <dbReference type="EC" id="5.3.1.24"/>
    </reaction>
</comment>
<comment type="pathway">
    <text evidence="1">Amino-acid biosynthesis; L-tryptophan biosynthesis; L-tryptophan from chorismate: step 3/5.</text>
</comment>
<comment type="similarity">
    <text evidence="1">Belongs to the TrpF family.</text>
</comment>
<gene>
    <name evidence="1" type="primary">trpF</name>
    <name type="ordered locus">Avin_34210</name>
</gene>
<feature type="chain" id="PRO_1000203206" description="N-(5'-phosphoribosyl)anthranilate isomerase">
    <location>
        <begin position="1"/>
        <end position="206"/>
    </location>
</feature>